<sequence>MRRRRLQLRYSSDEEEEDETGTSGVGDSVQSFGIASSIQPETSVSSNSNPNPGERIAISEVEIIDVFGNPQPTPPDSSIPTPYPVYPSESVSGNDYESPISEVLSRMGIKLKREWWVSCLSGLETSIPQFSYLDVAAKAKHCFEQFMFFDMNLCGGGVLPPNVASMNRIELAGPFVLQVDEIVNIGCPLKGRYENANAGLKRCLKLSMTDGVQRVFGMEYRPIKDLQVLAPAGLKIVVSSVQVRHGLLMLVPEIVEVLGGMVEELEEARKRLVVEVNKPPRGKRTRVGVVPSLTTRATLAAWSLNGNDTGNHVHDTGNHVNSSASGNASHTQANQGIPVHVTRTHNSSRAMDEPLASTNVGATVSRVEHMQIDTASAHGERTFSDIHSTSSNIHRAASTAGTGTSCSGACSGARSFANNVGGNSLDQTSNVTSFVEEMHIDTGRVRDTTTHIYGSDSGGVAAEFSNMVVDLEGPSVLSTNTEKPFTYLAELSQKWAVMKDTIHFVQGRIKCFLTGVKKFQFKQQSTYELLCYVDDGSLICEILLHNDVVQKRIGHSSMEVTAALSSSAPTSLNAMMKEKLKRFQLFLADFEGIMVVEMNRSSQYPVAIEMNQGCSLTDARLLLDRIKSSSRTSSSLNPVVVLSP</sequence>
<feature type="chain" id="PRO_0000429782" description="RecQ-mediated genome instability protein 1">
    <location>
        <begin position="1"/>
        <end position="644"/>
    </location>
</feature>
<feature type="region of interest" description="Disordered" evidence="2">
    <location>
        <begin position="1"/>
        <end position="54"/>
    </location>
</feature>
<feature type="compositionally biased region" description="Polar residues" evidence="2">
    <location>
        <begin position="28"/>
        <end position="51"/>
    </location>
</feature>
<gene>
    <name type="primary">RMI1</name>
    <name type="ordered locus">At5g63540</name>
    <name type="ORF">MLE2.17</name>
</gene>
<dbReference type="EMBL" id="AB007649">
    <property type="protein sequence ID" value="BAB08819.1"/>
    <property type="status" value="ALT_SEQ"/>
    <property type="molecule type" value="Genomic_DNA"/>
</dbReference>
<dbReference type="EMBL" id="CP002688">
    <property type="protein sequence ID" value="AED97765.1"/>
    <property type="molecule type" value="Genomic_DNA"/>
</dbReference>
<dbReference type="EMBL" id="AY735746">
    <property type="protein sequence ID" value="AAU44616.1"/>
    <property type="molecule type" value="mRNA"/>
</dbReference>
<dbReference type="EMBL" id="AY954880">
    <property type="protein sequence ID" value="AAX55206.1"/>
    <property type="molecule type" value="mRNA"/>
</dbReference>
<dbReference type="RefSeq" id="NP_201159.2">
    <molecule id="Q5XUX6-1"/>
    <property type="nucleotide sequence ID" value="NM_125749.5"/>
</dbReference>
<dbReference type="SMR" id="Q5XUX6"/>
<dbReference type="FunCoup" id="Q5XUX6">
    <property type="interactions" value="146"/>
</dbReference>
<dbReference type="STRING" id="3702.Q5XUX6"/>
<dbReference type="GlyGen" id="Q5XUX6">
    <property type="glycosylation" value="1 site"/>
</dbReference>
<dbReference type="PaxDb" id="3702-AT5G63540.2"/>
<dbReference type="ProteomicsDB" id="228150">
    <molecule id="Q5XUX6-1"/>
</dbReference>
<dbReference type="EnsemblPlants" id="AT5G63540.1">
    <molecule id="Q5XUX6-1"/>
    <property type="protein sequence ID" value="AT5G63540.1"/>
    <property type="gene ID" value="AT5G63540"/>
</dbReference>
<dbReference type="GeneID" id="836473"/>
<dbReference type="Gramene" id="AT5G63540.1">
    <molecule id="Q5XUX6-1"/>
    <property type="protein sequence ID" value="AT5G63540.1"/>
    <property type="gene ID" value="AT5G63540"/>
</dbReference>
<dbReference type="KEGG" id="ath:AT5G63540"/>
<dbReference type="Araport" id="AT5G63540"/>
<dbReference type="TAIR" id="AT5G63540">
    <property type="gene designation" value="RMI1"/>
</dbReference>
<dbReference type="eggNOG" id="ENOG502QPJ3">
    <property type="taxonomic scope" value="Eukaryota"/>
</dbReference>
<dbReference type="HOGENOM" id="CLU_014468_1_0_1"/>
<dbReference type="InParanoid" id="Q5XUX6"/>
<dbReference type="OMA" id="MCILQVV"/>
<dbReference type="PhylomeDB" id="Q5XUX6"/>
<dbReference type="PRO" id="PR:Q5XUX6"/>
<dbReference type="Proteomes" id="UP000006548">
    <property type="component" value="Chromosome 5"/>
</dbReference>
<dbReference type="ExpressionAtlas" id="Q5XUX6">
    <property type="expression patterns" value="baseline and differential"/>
</dbReference>
<dbReference type="GO" id="GO:0000166">
    <property type="term" value="F:nucleotide binding"/>
    <property type="evidence" value="ECO:0007669"/>
    <property type="project" value="InterPro"/>
</dbReference>
<dbReference type="GO" id="GO:0000712">
    <property type="term" value="P:resolution of meiotic recombination intermediates"/>
    <property type="evidence" value="ECO:0000315"/>
    <property type="project" value="UniProtKB"/>
</dbReference>
<dbReference type="FunFam" id="2.40.50.770:FF:000004">
    <property type="entry name" value="RecQ-mediated instability protein (DUF1767)"/>
    <property type="match status" value="1"/>
</dbReference>
<dbReference type="Gene3D" id="2.40.50.770">
    <property type="entry name" value="RecQ-mediated genome instability protein Rmi1, C-terminal domain"/>
    <property type="match status" value="1"/>
</dbReference>
<dbReference type="InterPro" id="IPR032199">
    <property type="entry name" value="RMI1_C"/>
</dbReference>
<dbReference type="InterPro" id="IPR049363">
    <property type="entry name" value="RMI1_N"/>
</dbReference>
<dbReference type="InterPro" id="IPR042470">
    <property type="entry name" value="RMI1_N_C_sf"/>
</dbReference>
<dbReference type="InterPro" id="IPR013894">
    <property type="entry name" value="RMI1_OB"/>
</dbReference>
<dbReference type="PANTHER" id="PTHR14790:SF15">
    <property type="entry name" value="RECQ-MEDIATED GENOME INSTABILITY PROTEIN 1"/>
    <property type="match status" value="1"/>
</dbReference>
<dbReference type="PANTHER" id="PTHR14790">
    <property type="entry name" value="RECQ-MEDIATED GENOME INSTABILITY PROTEIN 1 RMI1"/>
    <property type="match status" value="1"/>
</dbReference>
<dbReference type="Pfam" id="PF16099">
    <property type="entry name" value="RMI1_C"/>
    <property type="match status" value="1"/>
</dbReference>
<dbReference type="Pfam" id="PF08585">
    <property type="entry name" value="RMI1_N_C"/>
    <property type="match status" value="1"/>
</dbReference>
<dbReference type="Pfam" id="PF21000">
    <property type="entry name" value="RMI1_N_N"/>
    <property type="match status" value="1"/>
</dbReference>
<dbReference type="SMART" id="SM01161">
    <property type="entry name" value="DUF1767"/>
    <property type="match status" value="1"/>
</dbReference>
<reference key="1">
    <citation type="journal article" date="1997" name="DNA Res.">
        <title>Structural analysis of Arabidopsis thaliana chromosome 5. III. Sequence features of the regions of 1,191,918 bp covered by seventeen physically assigned P1 clones.</title>
        <authorList>
            <person name="Nakamura Y."/>
            <person name="Sato S."/>
            <person name="Kaneko T."/>
            <person name="Kotani H."/>
            <person name="Asamizu E."/>
            <person name="Miyajima N."/>
            <person name="Tabata S."/>
        </authorList>
    </citation>
    <scope>NUCLEOTIDE SEQUENCE [LARGE SCALE GENOMIC DNA]</scope>
    <source>
        <strain>cv. Columbia</strain>
    </source>
</reference>
<reference key="2">
    <citation type="journal article" date="2017" name="Plant J.">
        <title>Araport11: a complete reannotation of the Arabidopsis thaliana reference genome.</title>
        <authorList>
            <person name="Cheng C.Y."/>
            <person name="Krishnakumar V."/>
            <person name="Chan A.P."/>
            <person name="Thibaud-Nissen F."/>
            <person name="Schobel S."/>
            <person name="Town C.D."/>
        </authorList>
    </citation>
    <scope>GENOME REANNOTATION</scope>
    <source>
        <strain>cv. Columbia</strain>
    </source>
</reference>
<reference key="3">
    <citation type="submission" date="2005-03" db="EMBL/GenBank/DDBJ databases">
        <authorList>
            <person name="Underwood B.A."/>
            <person name="Xiao Y.-L."/>
            <person name="Moskal W.A. Jr."/>
            <person name="Monaghan E.L."/>
            <person name="Wang W."/>
            <person name="Redman J.C."/>
            <person name="Wu H.C."/>
            <person name="Utterback T."/>
            <person name="Town C.D."/>
        </authorList>
    </citation>
    <scope>NUCLEOTIDE SEQUENCE [LARGE SCALE MRNA]</scope>
    <source>
        <strain>cv. Columbia</strain>
    </source>
</reference>
<reference key="4">
    <citation type="journal article" date="2008" name="PLoS Genet.">
        <title>Topoisomerase 3alpha and RMI1 suppress somatic crossovers and are essential for resolution of meiotic recombination intermediates in Arabidopsis thaliana.</title>
        <authorList>
            <person name="Hartung F."/>
            <person name="Suer S."/>
            <person name="Knoll A."/>
            <person name="Wurz-Wildersinn R."/>
            <person name="Puchta H."/>
        </authorList>
    </citation>
    <scope>FUNCTION</scope>
    <scope>INTERACTION WITH TOP3A</scope>
    <scope>DISRUPTION PHENOTYPE</scope>
</reference>
<reference key="5">
    <citation type="journal article" date="2008" name="PLoS Genet.">
        <title>The Arabidopsis BLAP75/Rmi1 homologue plays crucial roles in meiotic double-strand break repair.</title>
        <authorList>
            <person name="Chelysheva L."/>
            <person name="Vezon D."/>
            <person name="Belcram K."/>
            <person name="Gendrot G."/>
            <person name="Grelon M."/>
        </authorList>
    </citation>
    <scope>FUNCTION</scope>
    <scope>DISRUPTION PHENOTYPE</scope>
</reference>
<reference key="6">
    <citation type="journal article" date="2013" name="Nucleic Acids Res.">
        <title>Different functions for the domains of the Arabidopsis thaliana RMI1 protein in DNA cross-link repair, somatic and meiotic recombination.</title>
        <authorList>
            <person name="Bonnet S."/>
            <person name="Knoll A."/>
            <person name="Hartung F."/>
            <person name="Puchta H."/>
        </authorList>
    </citation>
    <scope>FUNCTION</scope>
</reference>
<evidence type="ECO:0000250" key="1"/>
<evidence type="ECO:0000256" key="2">
    <source>
        <dbReference type="SAM" id="MobiDB-lite"/>
    </source>
</evidence>
<evidence type="ECO:0000269" key="3">
    <source>
    </source>
</evidence>
<evidence type="ECO:0000269" key="4">
    <source>
    </source>
</evidence>
<evidence type="ECO:0000269" key="5">
    <source>
    </source>
</evidence>
<evidence type="ECO:0000305" key="6"/>
<organism>
    <name type="scientific">Arabidopsis thaliana</name>
    <name type="common">Mouse-ear cress</name>
    <dbReference type="NCBI Taxonomy" id="3702"/>
    <lineage>
        <taxon>Eukaryota</taxon>
        <taxon>Viridiplantae</taxon>
        <taxon>Streptophyta</taxon>
        <taxon>Embryophyta</taxon>
        <taxon>Tracheophyta</taxon>
        <taxon>Spermatophyta</taxon>
        <taxon>Magnoliopsida</taxon>
        <taxon>eudicotyledons</taxon>
        <taxon>Gunneridae</taxon>
        <taxon>Pentapetalae</taxon>
        <taxon>rosids</taxon>
        <taxon>malvids</taxon>
        <taxon>Brassicales</taxon>
        <taxon>Brassicaceae</taxon>
        <taxon>Camelineae</taxon>
        <taxon>Arabidopsis</taxon>
    </lineage>
</organism>
<accession>Q5XUX6</accession>
<accession>Q9FMU8</accession>
<proteinExistence type="evidence at protein level"/>
<comment type="function">
    <text evidence="3 4 5">Essential component of the RMI complex, a complex that plays an important role in the resolution step of homologous recombination, in a process called Holliday Junction dissolution, to limit DNA crossover formation in cells. Together with TOP3A, is essential for the resolution of meiotic recombination intermediates, a step that prevents entanglement of the parental chromosomes.</text>
</comment>
<comment type="subunit">
    <text evidence="1">Component of the RMI complex, containing at least TOP3A and RMI1. The RMI complex interacts with RECQL4A (By similarity).</text>
</comment>
<comment type="alternative products">
    <event type="alternative splicing"/>
    <isoform>
        <id>Q5XUX6-1</id>
        <name>1</name>
        <sequence type="displayed"/>
    </isoform>
    <text>A number of isoforms are produced. According to EST sequences.</text>
</comment>
<comment type="disruption phenotype">
    <text evidence="3 4">sterile due to extensive chromosome breakage in meiosis I.</text>
</comment>
<comment type="similarity">
    <text evidence="6">Belongs to the RMI1 family.</text>
</comment>
<comment type="sequence caution" evidence="6">
    <conflict type="erroneous gene model prediction">
        <sequence resource="EMBL-CDS" id="BAB08819"/>
    </conflict>
</comment>
<keyword id="KW-0025">Alternative splicing</keyword>
<keyword id="KW-0469">Meiosis</keyword>
<keyword id="KW-1185">Reference proteome</keyword>
<name>RMI1_ARATH</name>
<protein>
    <recommendedName>
        <fullName>RecQ-mediated genome instability protein 1</fullName>
    </recommendedName>
    <alternativeName>
        <fullName>BLM-associated protein of 75 kDa homolog</fullName>
        <shortName>BLAP75</shortName>
    </alternativeName>
</protein>